<protein>
    <recommendedName>
        <fullName evidence="1">Bifunctional enzyme IspD/IspF</fullName>
    </recommendedName>
    <domain>
        <recommendedName>
            <fullName evidence="1">2-C-methyl-D-erythritol 4-phosphate cytidylyltransferase</fullName>
            <ecNumber evidence="1">2.7.7.60</ecNumber>
        </recommendedName>
        <alternativeName>
            <fullName evidence="1">4-diphosphocytidyl-2C-methyl-D-erythritol synthase</fullName>
        </alternativeName>
        <alternativeName>
            <fullName evidence="1">MEP cytidylyltransferase</fullName>
            <shortName evidence="1">MCT</shortName>
        </alternativeName>
    </domain>
    <domain>
        <recommendedName>
            <fullName evidence="1">2-C-methyl-D-erythritol 2,4-cyclodiphosphate synthase</fullName>
            <shortName evidence="1">MECDP-synthase</shortName>
            <shortName evidence="1">MECPP-synthase</shortName>
            <shortName evidence="1">MECPS</shortName>
            <ecNumber evidence="1">4.6.1.12</ecNumber>
        </recommendedName>
    </domain>
</protein>
<organism>
    <name type="scientific">Paramagnetospirillum magneticum (strain ATCC 700264 / AMB-1)</name>
    <name type="common">Magnetospirillum magneticum</name>
    <dbReference type="NCBI Taxonomy" id="342108"/>
    <lineage>
        <taxon>Bacteria</taxon>
        <taxon>Pseudomonadati</taxon>
        <taxon>Pseudomonadota</taxon>
        <taxon>Alphaproteobacteria</taxon>
        <taxon>Rhodospirillales</taxon>
        <taxon>Magnetospirillaceae</taxon>
        <taxon>Paramagnetospirillum</taxon>
    </lineage>
</organism>
<accession>Q2W4Q8</accession>
<evidence type="ECO:0000255" key="1">
    <source>
        <dbReference type="HAMAP-Rule" id="MF_01520"/>
    </source>
</evidence>
<name>ISPDF_PARM1</name>
<proteinExistence type="inferred from homology"/>
<keyword id="KW-0414">Isoprene biosynthesis</keyword>
<keyword id="KW-0456">Lyase</keyword>
<keyword id="KW-0479">Metal-binding</keyword>
<keyword id="KW-0511">Multifunctional enzyme</keyword>
<keyword id="KW-0548">Nucleotidyltransferase</keyword>
<keyword id="KW-0808">Transferase</keyword>
<gene>
    <name evidence="1" type="primary">ispDF</name>
    <name type="ordered locus">amb2363</name>
</gene>
<feature type="chain" id="PRO_0000292854" description="Bifunctional enzyme IspD/IspF">
    <location>
        <begin position="1"/>
        <end position="384"/>
    </location>
</feature>
<feature type="region of interest" description="2-C-methyl-D-erythritol 4-phosphate cytidylyltransferase" evidence="1">
    <location>
        <begin position="1"/>
        <end position="226"/>
    </location>
</feature>
<feature type="region of interest" description="2-C-methyl-D-erythritol 2,4-cyclodiphosphate synthase" evidence="1">
    <location>
        <begin position="227"/>
        <end position="384"/>
    </location>
</feature>
<feature type="binding site" evidence="1">
    <location>
        <begin position="233"/>
        <end position="235"/>
    </location>
    <ligand>
        <name>4-CDP-2-C-methyl-D-erythritol 2-phosphate</name>
        <dbReference type="ChEBI" id="CHEBI:57919"/>
    </ligand>
</feature>
<feature type="binding site" evidence="1">
    <location>
        <position position="233"/>
    </location>
    <ligand>
        <name>a divalent metal cation</name>
        <dbReference type="ChEBI" id="CHEBI:60240"/>
    </ligand>
</feature>
<feature type="binding site" evidence="1">
    <location>
        <position position="235"/>
    </location>
    <ligand>
        <name>a divalent metal cation</name>
        <dbReference type="ChEBI" id="CHEBI:60240"/>
    </ligand>
</feature>
<feature type="binding site" evidence="1">
    <location>
        <begin position="260"/>
        <end position="261"/>
    </location>
    <ligand>
        <name>4-CDP-2-C-methyl-D-erythritol 2-phosphate</name>
        <dbReference type="ChEBI" id="CHEBI:57919"/>
    </ligand>
</feature>
<feature type="binding site" evidence="1">
    <location>
        <position position="268"/>
    </location>
    <ligand>
        <name>a divalent metal cation</name>
        <dbReference type="ChEBI" id="CHEBI:60240"/>
    </ligand>
</feature>
<feature type="binding site" evidence="1">
    <location>
        <begin position="282"/>
        <end position="284"/>
    </location>
    <ligand>
        <name>4-CDP-2-C-methyl-D-erythritol 2-phosphate</name>
        <dbReference type="ChEBI" id="CHEBI:57919"/>
    </ligand>
</feature>
<feature type="binding site" evidence="1">
    <location>
        <begin position="358"/>
        <end position="361"/>
    </location>
    <ligand>
        <name>4-CDP-2-C-methyl-D-erythritol 2-phosphate</name>
        <dbReference type="ChEBI" id="CHEBI:57919"/>
    </ligand>
</feature>
<feature type="binding site" evidence="1">
    <location>
        <position position="365"/>
    </location>
    <ligand>
        <name>4-CDP-2-C-methyl-D-erythritol 2-phosphate</name>
        <dbReference type="ChEBI" id="CHEBI:57919"/>
    </ligand>
</feature>
<feature type="binding site" evidence="1">
    <location>
        <position position="368"/>
    </location>
    <ligand>
        <name>4-CDP-2-C-methyl-D-erythritol 2-phosphate</name>
        <dbReference type="ChEBI" id="CHEBI:57919"/>
    </ligand>
</feature>
<feature type="site" description="Transition state stabilizer" evidence="1">
    <location>
        <position position="16"/>
    </location>
</feature>
<feature type="site" description="Transition state stabilizer" evidence="1">
    <location>
        <position position="23"/>
    </location>
</feature>
<feature type="site" description="Positions MEP for the nucleophilic attack" evidence="1">
    <location>
        <position position="152"/>
    </location>
</feature>
<feature type="site" description="Positions MEP for the nucleophilic attack" evidence="1">
    <location>
        <position position="206"/>
    </location>
</feature>
<feature type="site" description="Transition state stabilizer" evidence="1">
    <location>
        <position position="260"/>
    </location>
</feature>
<feature type="site" description="Transition state stabilizer" evidence="1">
    <location>
        <position position="359"/>
    </location>
</feature>
<dbReference type="EC" id="2.7.7.60" evidence="1"/>
<dbReference type="EC" id="4.6.1.12" evidence="1"/>
<dbReference type="EMBL" id="AP007255">
    <property type="protein sequence ID" value="BAE51167.1"/>
    <property type="molecule type" value="Genomic_DNA"/>
</dbReference>
<dbReference type="RefSeq" id="WP_011384759.1">
    <property type="nucleotide sequence ID" value="NC_007626.1"/>
</dbReference>
<dbReference type="SMR" id="Q2W4Q8"/>
<dbReference type="STRING" id="342108.amb2363"/>
<dbReference type="KEGG" id="mag:amb2363"/>
<dbReference type="HOGENOM" id="CLU_042800_2_3_5"/>
<dbReference type="OrthoDB" id="9804336at2"/>
<dbReference type="UniPathway" id="UPA00056">
    <property type="reaction ID" value="UER00093"/>
</dbReference>
<dbReference type="UniPathway" id="UPA00056">
    <property type="reaction ID" value="UER00095"/>
</dbReference>
<dbReference type="Proteomes" id="UP000007058">
    <property type="component" value="Chromosome"/>
</dbReference>
<dbReference type="GO" id="GO:0008685">
    <property type="term" value="F:2-C-methyl-D-erythritol 2,4-cyclodiphosphate synthase activity"/>
    <property type="evidence" value="ECO:0007669"/>
    <property type="project" value="UniProtKB-UniRule"/>
</dbReference>
<dbReference type="GO" id="GO:0050518">
    <property type="term" value="F:2-C-methyl-D-erythritol 4-phosphate cytidylyltransferase activity"/>
    <property type="evidence" value="ECO:0007669"/>
    <property type="project" value="UniProtKB-UniRule"/>
</dbReference>
<dbReference type="GO" id="GO:0046872">
    <property type="term" value="F:metal ion binding"/>
    <property type="evidence" value="ECO:0007669"/>
    <property type="project" value="UniProtKB-KW"/>
</dbReference>
<dbReference type="GO" id="GO:0019288">
    <property type="term" value="P:isopentenyl diphosphate biosynthetic process, methylerythritol 4-phosphate pathway"/>
    <property type="evidence" value="ECO:0007669"/>
    <property type="project" value="UniProtKB-UniRule"/>
</dbReference>
<dbReference type="GO" id="GO:0016114">
    <property type="term" value="P:terpenoid biosynthetic process"/>
    <property type="evidence" value="ECO:0007669"/>
    <property type="project" value="InterPro"/>
</dbReference>
<dbReference type="CDD" id="cd02516">
    <property type="entry name" value="CDP-ME_synthetase"/>
    <property type="match status" value="1"/>
</dbReference>
<dbReference type="CDD" id="cd00554">
    <property type="entry name" value="MECDP_synthase"/>
    <property type="match status" value="1"/>
</dbReference>
<dbReference type="FunFam" id="3.90.550.10:FF:000003">
    <property type="entry name" value="2-C-methyl-D-erythritol 4-phosphate cytidylyltransferase"/>
    <property type="match status" value="1"/>
</dbReference>
<dbReference type="Gene3D" id="3.30.1330.50">
    <property type="entry name" value="2-C-methyl-D-erythritol 2,4-cyclodiphosphate synthase"/>
    <property type="match status" value="1"/>
</dbReference>
<dbReference type="Gene3D" id="3.90.550.10">
    <property type="entry name" value="Spore Coat Polysaccharide Biosynthesis Protein SpsA, Chain A"/>
    <property type="match status" value="1"/>
</dbReference>
<dbReference type="HAMAP" id="MF_00108">
    <property type="entry name" value="IspD"/>
    <property type="match status" value="1"/>
</dbReference>
<dbReference type="HAMAP" id="MF_01520">
    <property type="entry name" value="IspDF"/>
    <property type="match status" value="1"/>
</dbReference>
<dbReference type="HAMAP" id="MF_00107">
    <property type="entry name" value="IspF"/>
    <property type="match status" value="1"/>
</dbReference>
<dbReference type="InterPro" id="IPR001228">
    <property type="entry name" value="IspD"/>
</dbReference>
<dbReference type="InterPro" id="IPR026596">
    <property type="entry name" value="IspD/F"/>
</dbReference>
<dbReference type="InterPro" id="IPR034683">
    <property type="entry name" value="IspD/TarI"/>
</dbReference>
<dbReference type="InterPro" id="IPR018294">
    <property type="entry name" value="ISPD_synthase_CS"/>
</dbReference>
<dbReference type="InterPro" id="IPR003526">
    <property type="entry name" value="MECDP_synthase"/>
</dbReference>
<dbReference type="InterPro" id="IPR020555">
    <property type="entry name" value="MECDP_synthase_CS"/>
</dbReference>
<dbReference type="InterPro" id="IPR036571">
    <property type="entry name" value="MECDP_synthase_sf"/>
</dbReference>
<dbReference type="InterPro" id="IPR029044">
    <property type="entry name" value="Nucleotide-diphossugar_trans"/>
</dbReference>
<dbReference type="NCBIfam" id="TIGR00453">
    <property type="entry name" value="ispD"/>
    <property type="match status" value="1"/>
</dbReference>
<dbReference type="NCBIfam" id="TIGR00151">
    <property type="entry name" value="ispF"/>
    <property type="match status" value="1"/>
</dbReference>
<dbReference type="NCBIfam" id="NF006899">
    <property type="entry name" value="PRK09382.1"/>
    <property type="match status" value="1"/>
</dbReference>
<dbReference type="PANTHER" id="PTHR43181">
    <property type="entry name" value="2-C-METHYL-D-ERYTHRITOL 2,4-CYCLODIPHOSPHATE SYNTHASE, CHLOROPLASTIC"/>
    <property type="match status" value="1"/>
</dbReference>
<dbReference type="PANTHER" id="PTHR43181:SF1">
    <property type="entry name" value="2-C-METHYL-D-ERYTHRITOL 2,4-CYCLODIPHOSPHATE SYNTHASE, CHLOROPLASTIC"/>
    <property type="match status" value="1"/>
</dbReference>
<dbReference type="Pfam" id="PF01128">
    <property type="entry name" value="IspD"/>
    <property type="match status" value="1"/>
</dbReference>
<dbReference type="Pfam" id="PF02542">
    <property type="entry name" value="YgbB"/>
    <property type="match status" value="1"/>
</dbReference>
<dbReference type="SUPFAM" id="SSF69765">
    <property type="entry name" value="IpsF-like"/>
    <property type="match status" value="1"/>
</dbReference>
<dbReference type="SUPFAM" id="SSF53448">
    <property type="entry name" value="Nucleotide-diphospho-sugar transferases"/>
    <property type="match status" value="1"/>
</dbReference>
<dbReference type="PROSITE" id="PS01295">
    <property type="entry name" value="ISPD"/>
    <property type="match status" value="1"/>
</dbReference>
<dbReference type="PROSITE" id="PS01350">
    <property type="entry name" value="ISPF"/>
    <property type="match status" value="1"/>
</dbReference>
<comment type="function">
    <text evidence="1">Bifunctional enzyme that catalyzes the formation of 4-diphosphocytidyl-2-C-methyl-D-erythritol from CTP and 2-C-methyl-D-erythritol 4-phosphate (MEP) (IspD), and catalyzes the conversion of 4-diphosphocytidyl-2-C-methyl-D-erythritol 2-phosphate (CDP-ME2P) to 2-C-methyl-D-erythritol 2,4-cyclodiphosphate (ME-CPP) with a corresponding release of cytidine 5-monophosphate (CMP) (IspF).</text>
</comment>
<comment type="catalytic activity">
    <reaction evidence="1">
        <text>2-C-methyl-D-erythritol 4-phosphate + CTP + H(+) = 4-CDP-2-C-methyl-D-erythritol + diphosphate</text>
        <dbReference type="Rhea" id="RHEA:13429"/>
        <dbReference type="ChEBI" id="CHEBI:15378"/>
        <dbReference type="ChEBI" id="CHEBI:33019"/>
        <dbReference type="ChEBI" id="CHEBI:37563"/>
        <dbReference type="ChEBI" id="CHEBI:57823"/>
        <dbReference type="ChEBI" id="CHEBI:58262"/>
        <dbReference type="EC" id="2.7.7.60"/>
    </reaction>
</comment>
<comment type="catalytic activity">
    <reaction evidence="1">
        <text>4-CDP-2-C-methyl-D-erythritol 2-phosphate = 2-C-methyl-D-erythritol 2,4-cyclic diphosphate + CMP</text>
        <dbReference type="Rhea" id="RHEA:23864"/>
        <dbReference type="ChEBI" id="CHEBI:57919"/>
        <dbReference type="ChEBI" id="CHEBI:58483"/>
        <dbReference type="ChEBI" id="CHEBI:60377"/>
        <dbReference type="EC" id="4.6.1.12"/>
    </reaction>
</comment>
<comment type="cofactor">
    <cofactor evidence="1">
        <name>a divalent metal cation</name>
        <dbReference type="ChEBI" id="CHEBI:60240"/>
    </cofactor>
</comment>
<comment type="pathway">
    <text evidence="1">Isoprenoid biosynthesis; isopentenyl diphosphate biosynthesis via DXP pathway; isopentenyl diphosphate from 1-deoxy-D-xylulose 5-phosphate: step 2/6.</text>
</comment>
<comment type="pathway">
    <text evidence="1">Isoprenoid biosynthesis; isopentenyl diphosphate biosynthesis via DXP pathway; isopentenyl diphosphate from 1-deoxy-D-xylulose 5-phosphate: step 4/6.</text>
</comment>
<comment type="similarity">
    <text evidence="1">In the N-terminal section; belongs to the IspD/TarI cytidylyltransferase family. IspD subfamily.</text>
</comment>
<comment type="similarity">
    <text evidence="1">In the C-terminal section; belongs to the IspF family.</text>
</comment>
<sequence length="384" mass="40554">MAKTVVLVVAAGRGRRFGGDLPKQYHDLAGRMVLRHTLAAFATNPEIGAVRAVIHPDDRQLYDMAAAGLNLLEPVHGGATRQDSVRLGLDSLKDLNPDKVLIHDGARPFIDHGTIGRVIRALDRHPGALPVVPVADTLKRGQDGFVADTVDRANLFRAQTPQGFRYAEIVAAHHAVIGNELTDDAAVAEKAGLAVELVNGAEDNVKITTGADLERARCLFDGPGEVRSASGYDVHRFDPAKDACWLCGVPVPHEAGLLGHSDADVGLHALTDAVLGAISAGDIGHHFPPTDARWKGAASDQFLAHAGSLVTAKGGRIVNVDVTIICERPKVGPHRAAMAARVAEILGISQDRVSVKATTTEGLGFTGRKEGIAAQAMASVWLPR</sequence>
<reference key="1">
    <citation type="journal article" date="2005" name="DNA Res.">
        <title>Complete genome sequence of the facultative anaerobic magnetotactic bacterium Magnetospirillum sp. strain AMB-1.</title>
        <authorList>
            <person name="Matsunaga T."/>
            <person name="Okamura Y."/>
            <person name="Fukuda Y."/>
            <person name="Wahyudi A.T."/>
            <person name="Murase Y."/>
            <person name="Takeyama H."/>
        </authorList>
    </citation>
    <scope>NUCLEOTIDE SEQUENCE [LARGE SCALE GENOMIC DNA]</scope>
    <source>
        <strain>ATCC 700264 / AMB-1</strain>
    </source>
</reference>